<organism>
    <name type="scientific">Novosphingobium aromaticivorans (strain ATCC 700278 / DSM 12444 / CCUG 56034 / CIP 105152 / NBRC 16084 / F199)</name>
    <dbReference type="NCBI Taxonomy" id="279238"/>
    <lineage>
        <taxon>Bacteria</taxon>
        <taxon>Pseudomonadati</taxon>
        <taxon>Pseudomonadota</taxon>
        <taxon>Alphaproteobacteria</taxon>
        <taxon>Sphingomonadales</taxon>
        <taxon>Sphingomonadaceae</taxon>
        <taxon>Novosphingobium</taxon>
    </lineage>
</organism>
<dbReference type="EC" id="5.4.2.11" evidence="1"/>
<dbReference type="EMBL" id="CP000248">
    <property type="protein sequence ID" value="ABD27700.1"/>
    <property type="molecule type" value="Genomic_DNA"/>
</dbReference>
<dbReference type="RefSeq" id="WP_011446902.1">
    <property type="nucleotide sequence ID" value="NC_007794.1"/>
</dbReference>
<dbReference type="SMR" id="Q2G373"/>
<dbReference type="STRING" id="279238.Saro_3265"/>
<dbReference type="KEGG" id="nar:Saro_3265"/>
<dbReference type="eggNOG" id="COG0588">
    <property type="taxonomic scope" value="Bacteria"/>
</dbReference>
<dbReference type="HOGENOM" id="CLU_033323_1_1_5"/>
<dbReference type="UniPathway" id="UPA00109">
    <property type="reaction ID" value="UER00186"/>
</dbReference>
<dbReference type="Proteomes" id="UP000009134">
    <property type="component" value="Chromosome"/>
</dbReference>
<dbReference type="GO" id="GO:0004619">
    <property type="term" value="F:phosphoglycerate mutase activity"/>
    <property type="evidence" value="ECO:0007669"/>
    <property type="project" value="UniProtKB-EC"/>
</dbReference>
<dbReference type="GO" id="GO:0006094">
    <property type="term" value="P:gluconeogenesis"/>
    <property type="evidence" value="ECO:0007669"/>
    <property type="project" value="UniProtKB-UniRule"/>
</dbReference>
<dbReference type="GO" id="GO:0006096">
    <property type="term" value="P:glycolytic process"/>
    <property type="evidence" value="ECO:0007669"/>
    <property type="project" value="UniProtKB-UniRule"/>
</dbReference>
<dbReference type="CDD" id="cd07067">
    <property type="entry name" value="HP_PGM_like"/>
    <property type="match status" value="1"/>
</dbReference>
<dbReference type="FunFam" id="3.40.50.1240:FF:000003">
    <property type="entry name" value="2,3-bisphosphoglycerate-dependent phosphoglycerate mutase"/>
    <property type="match status" value="1"/>
</dbReference>
<dbReference type="Gene3D" id="3.40.50.1240">
    <property type="entry name" value="Phosphoglycerate mutase-like"/>
    <property type="match status" value="1"/>
</dbReference>
<dbReference type="HAMAP" id="MF_01039">
    <property type="entry name" value="PGAM_GpmA"/>
    <property type="match status" value="1"/>
</dbReference>
<dbReference type="InterPro" id="IPR013078">
    <property type="entry name" value="His_Pase_superF_clade-1"/>
</dbReference>
<dbReference type="InterPro" id="IPR029033">
    <property type="entry name" value="His_PPase_superfam"/>
</dbReference>
<dbReference type="InterPro" id="IPR001345">
    <property type="entry name" value="PG/BPGM_mutase_AS"/>
</dbReference>
<dbReference type="InterPro" id="IPR005952">
    <property type="entry name" value="Phosphogly_mut1"/>
</dbReference>
<dbReference type="NCBIfam" id="TIGR01258">
    <property type="entry name" value="pgm_1"/>
    <property type="match status" value="1"/>
</dbReference>
<dbReference type="NCBIfam" id="NF010713">
    <property type="entry name" value="PRK14115.1"/>
    <property type="match status" value="1"/>
</dbReference>
<dbReference type="PANTHER" id="PTHR11931">
    <property type="entry name" value="PHOSPHOGLYCERATE MUTASE"/>
    <property type="match status" value="1"/>
</dbReference>
<dbReference type="Pfam" id="PF00300">
    <property type="entry name" value="His_Phos_1"/>
    <property type="match status" value="1"/>
</dbReference>
<dbReference type="PIRSF" id="PIRSF000709">
    <property type="entry name" value="6PFK_2-Ptase"/>
    <property type="match status" value="1"/>
</dbReference>
<dbReference type="SMART" id="SM00855">
    <property type="entry name" value="PGAM"/>
    <property type="match status" value="1"/>
</dbReference>
<dbReference type="SUPFAM" id="SSF53254">
    <property type="entry name" value="Phosphoglycerate mutase-like"/>
    <property type="match status" value="1"/>
</dbReference>
<dbReference type="PROSITE" id="PS00175">
    <property type="entry name" value="PG_MUTASE"/>
    <property type="match status" value="1"/>
</dbReference>
<proteinExistence type="inferred from homology"/>
<protein>
    <recommendedName>
        <fullName evidence="1">2,3-bisphosphoglycerate-dependent phosphoglycerate mutase</fullName>
        <shortName evidence="1">BPG-dependent PGAM</shortName>
        <shortName evidence="1">PGAM</shortName>
        <shortName evidence="1">Phosphoglyceromutase</shortName>
        <shortName evidence="1">dPGM</shortName>
        <ecNumber evidence="1">5.4.2.11</ecNumber>
    </recommendedName>
</protein>
<keyword id="KW-0312">Gluconeogenesis</keyword>
<keyword id="KW-0324">Glycolysis</keyword>
<keyword id="KW-0413">Isomerase</keyword>
<keyword id="KW-1185">Reference proteome</keyword>
<evidence type="ECO:0000255" key="1">
    <source>
        <dbReference type="HAMAP-Rule" id="MF_01039"/>
    </source>
</evidence>
<gene>
    <name evidence="1" type="primary">gpmA</name>
    <name type="ordered locus">Saro_3265</name>
</gene>
<reference key="1">
    <citation type="submission" date="2006-01" db="EMBL/GenBank/DDBJ databases">
        <title>Complete sequence of Novosphingobium aromaticivorans DSM 12444.</title>
        <authorList>
            <consortium name="US DOE Joint Genome Institute"/>
            <person name="Copeland A."/>
            <person name="Lucas S."/>
            <person name="Lapidus A."/>
            <person name="Barry K."/>
            <person name="Detter J.C."/>
            <person name="Glavina T."/>
            <person name="Hammon N."/>
            <person name="Israni S."/>
            <person name="Pitluck S."/>
            <person name="Chain P."/>
            <person name="Malfatti S."/>
            <person name="Shin M."/>
            <person name="Vergez L."/>
            <person name="Schmutz J."/>
            <person name="Larimer F."/>
            <person name="Land M."/>
            <person name="Kyrpides N."/>
            <person name="Ivanova N."/>
            <person name="Fredrickson J."/>
            <person name="Balkwill D."/>
            <person name="Romine M.F."/>
            <person name="Richardson P."/>
        </authorList>
    </citation>
    <scope>NUCLEOTIDE SEQUENCE [LARGE SCALE GENOMIC DNA]</scope>
    <source>
        <strain>ATCC 700278 / DSM 12444 / CCUG 56034 / CIP 105152 / NBRC 16084 / F199</strain>
    </source>
</reference>
<comment type="function">
    <text evidence="1">Catalyzes the interconversion of 2-phosphoglycerate and 3-phosphoglycerate.</text>
</comment>
<comment type="catalytic activity">
    <reaction evidence="1">
        <text>(2R)-2-phosphoglycerate = (2R)-3-phosphoglycerate</text>
        <dbReference type="Rhea" id="RHEA:15901"/>
        <dbReference type="ChEBI" id="CHEBI:58272"/>
        <dbReference type="ChEBI" id="CHEBI:58289"/>
        <dbReference type="EC" id="5.4.2.11"/>
    </reaction>
</comment>
<comment type="pathway">
    <text evidence="1">Carbohydrate degradation; glycolysis; pyruvate from D-glyceraldehyde 3-phosphate: step 3/5.</text>
</comment>
<comment type="subunit">
    <text evidence="1">Homodimer.</text>
</comment>
<comment type="similarity">
    <text evidence="1">Belongs to the phosphoglycerate mutase family. BPG-dependent PGAM subfamily.</text>
</comment>
<sequence>MPRLILIRHGQSQWNLENRFTGWWDVDVTEKGAAEAFAAGKLLKDKGVLPTLAFTSLQTRAIKTLHLALEAAGRLWVQEDKDWRLNERHYGGLTGLDKAETAAKHGDEQVKVWRRSFDVPPPPLEAGSEFDLASDPRYDGIAVPATESLKDTIARVLPCWEEKIAPALRAGETVIVSAHGNSLRALVKHLSGISDEDITGLEIPTGQPIVYELDNDLAQVERYYLSER</sequence>
<feature type="chain" id="PRO_1000064084" description="2,3-bisphosphoglycerate-dependent phosphoglycerate mutase">
    <location>
        <begin position="1"/>
        <end position="228"/>
    </location>
</feature>
<feature type="active site" description="Tele-phosphohistidine intermediate" evidence="1">
    <location>
        <position position="9"/>
    </location>
</feature>
<feature type="active site" description="Proton donor/acceptor" evidence="1">
    <location>
        <position position="87"/>
    </location>
</feature>
<feature type="binding site" evidence="1">
    <location>
        <begin position="8"/>
        <end position="15"/>
    </location>
    <ligand>
        <name>substrate</name>
    </ligand>
</feature>
<feature type="binding site" evidence="1">
    <location>
        <begin position="21"/>
        <end position="22"/>
    </location>
    <ligand>
        <name>substrate</name>
    </ligand>
</feature>
<feature type="binding site" evidence="1">
    <location>
        <position position="60"/>
    </location>
    <ligand>
        <name>substrate</name>
    </ligand>
</feature>
<feature type="binding site" evidence="1">
    <location>
        <begin position="87"/>
        <end position="90"/>
    </location>
    <ligand>
        <name>substrate</name>
    </ligand>
</feature>
<feature type="binding site" evidence="1">
    <location>
        <position position="98"/>
    </location>
    <ligand>
        <name>substrate</name>
    </ligand>
</feature>
<feature type="binding site" evidence="1">
    <location>
        <begin position="114"/>
        <end position="115"/>
    </location>
    <ligand>
        <name>substrate</name>
    </ligand>
</feature>
<feature type="binding site" evidence="1">
    <location>
        <begin position="180"/>
        <end position="181"/>
    </location>
    <ligand>
        <name>substrate</name>
    </ligand>
</feature>
<feature type="site" description="Transition state stabilizer" evidence="1">
    <location>
        <position position="179"/>
    </location>
</feature>
<name>GPMA_NOVAD</name>
<accession>Q2G373</accession>